<organism>
    <name type="scientific">Shigella dysenteriae serotype 1 (strain Sd197)</name>
    <dbReference type="NCBI Taxonomy" id="300267"/>
    <lineage>
        <taxon>Bacteria</taxon>
        <taxon>Pseudomonadati</taxon>
        <taxon>Pseudomonadota</taxon>
        <taxon>Gammaproteobacteria</taxon>
        <taxon>Enterobacterales</taxon>
        <taxon>Enterobacteriaceae</taxon>
        <taxon>Shigella</taxon>
    </lineage>
</organism>
<evidence type="ECO:0000255" key="1">
    <source>
        <dbReference type="HAMAP-Rule" id="MF_00564"/>
    </source>
</evidence>
<name>RNPH_SHIDS</name>
<proteinExistence type="inferred from homology"/>
<sequence>MRPAGRSNNQVRPVTLTRNYTKHAEGSVLVEFGDTKVLCTASIEEGVPRFLKGQGQGWITAEYGMLPRSTHTRNAREAAKGKQGGRTMEIQRLIARALRAAVDLKALGEFTITLDCDVLQADGGTRTASITGACMALADALQKLVENGKLKTNPMKGMVAAVSVGIVNGEAVCDLEYVEDSAAETDMNVVMTEDGRIIEVQGTAEGEPFTHEELLTLLALARGGIESIVATQKAALAN</sequence>
<protein>
    <recommendedName>
        <fullName evidence="1">Ribonuclease PH</fullName>
        <shortName evidence="1">RNase PH</shortName>
        <ecNumber evidence="1">2.7.7.56</ecNumber>
    </recommendedName>
    <alternativeName>
        <fullName evidence="1">tRNA nucleotidyltransferase</fullName>
    </alternativeName>
</protein>
<feature type="chain" id="PRO_1000024890" description="Ribonuclease PH">
    <location>
        <begin position="1"/>
        <end position="238"/>
    </location>
</feature>
<feature type="binding site" evidence="1">
    <location>
        <position position="86"/>
    </location>
    <ligand>
        <name>phosphate</name>
        <dbReference type="ChEBI" id="CHEBI:43474"/>
        <note>substrate</note>
    </ligand>
</feature>
<feature type="binding site" evidence="1">
    <location>
        <begin position="124"/>
        <end position="126"/>
    </location>
    <ligand>
        <name>phosphate</name>
        <dbReference type="ChEBI" id="CHEBI:43474"/>
        <note>substrate</note>
    </ligand>
</feature>
<comment type="function">
    <text evidence="1">Phosphorolytic 3'-5' exoribonuclease that plays an important role in tRNA 3'-end maturation. Removes nucleotide residues following the 3'-CCA terminus of tRNAs; can also add nucleotides to the ends of RNA molecules by using nucleoside diphosphates as substrates, but this may not be physiologically important. Probably plays a role in initiation of 16S rRNA degradation (leading to ribosome degradation) during starvation.</text>
</comment>
<comment type="catalytic activity">
    <reaction evidence="1">
        <text>tRNA(n+1) + phosphate = tRNA(n) + a ribonucleoside 5'-diphosphate</text>
        <dbReference type="Rhea" id="RHEA:10628"/>
        <dbReference type="Rhea" id="RHEA-COMP:17343"/>
        <dbReference type="Rhea" id="RHEA-COMP:17344"/>
        <dbReference type="ChEBI" id="CHEBI:43474"/>
        <dbReference type="ChEBI" id="CHEBI:57930"/>
        <dbReference type="ChEBI" id="CHEBI:173114"/>
        <dbReference type="EC" id="2.7.7.56"/>
    </reaction>
</comment>
<comment type="subunit">
    <text evidence="1">Homohexameric ring arranged as a trimer of dimers.</text>
</comment>
<comment type="similarity">
    <text evidence="1">Belongs to the RNase PH family.</text>
</comment>
<accession>Q329L3</accession>
<dbReference type="EC" id="2.7.7.56" evidence="1"/>
<dbReference type="EMBL" id="CP000034">
    <property type="protein sequence ID" value="ABB63992.1"/>
    <property type="molecule type" value="Genomic_DNA"/>
</dbReference>
<dbReference type="RefSeq" id="WP_001247084.1">
    <property type="nucleotide sequence ID" value="NC_007606.1"/>
</dbReference>
<dbReference type="RefSeq" id="YP_405483.1">
    <property type="nucleotide sequence ID" value="NC_007606.1"/>
</dbReference>
<dbReference type="SMR" id="Q329L3"/>
<dbReference type="STRING" id="300267.SDY_4074"/>
<dbReference type="EnsemblBacteria" id="ABB63992">
    <property type="protein sequence ID" value="ABB63992"/>
    <property type="gene ID" value="SDY_4074"/>
</dbReference>
<dbReference type="KEGG" id="sdy:SDY_4074"/>
<dbReference type="PATRIC" id="fig|300267.13.peg.4793"/>
<dbReference type="HOGENOM" id="CLU_050858_0_0_6"/>
<dbReference type="Proteomes" id="UP000002716">
    <property type="component" value="Chromosome"/>
</dbReference>
<dbReference type="GO" id="GO:0000175">
    <property type="term" value="F:3'-5'-RNA exonuclease activity"/>
    <property type="evidence" value="ECO:0007669"/>
    <property type="project" value="UniProtKB-UniRule"/>
</dbReference>
<dbReference type="GO" id="GO:0000049">
    <property type="term" value="F:tRNA binding"/>
    <property type="evidence" value="ECO:0007669"/>
    <property type="project" value="UniProtKB-UniRule"/>
</dbReference>
<dbReference type="GO" id="GO:0009022">
    <property type="term" value="F:tRNA nucleotidyltransferase activity"/>
    <property type="evidence" value="ECO:0007669"/>
    <property type="project" value="UniProtKB-UniRule"/>
</dbReference>
<dbReference type="GO" id="GO:0016075">
    <property type="term" value="P:rRNA catabolic process"/>
    <property type="evidence" value="ECO:0007669"/>
    <property type="project" value="UniProtKB-UniRule"/>
</dbReference>
<dbReference type="GO" id="GO:0006364">
    <property type="term" value="P:rRNA processing"/>
    <property type="evidence" value="ECO:0007669"/>
    <property type="project" value="UniProtKB-KW"/>
</dbReference>
<dbReference type="GO" id="GO:0008033">
    <property type="term" value="P:tRNA processing"/>
    <property type="evidence" value="ECO:0007669"/>
    <property type="project" value="UniProtKB-UniRule"/>
</dbReference>
<dbReference type="CDD" id="cd11362">
    <property type="entry name" value="RNase_PH_bact"/>
    <property type="match status" value="1"/>
</dbReference>
<dbReference type="FunFam" id="3.30.230.70:FF:000003">
    <property type="entry name" value="Ribonuclease PH"/>
    <property type="match status" value="1"/>
</dbReference>
<dbReference type="Gene3D" id="3.30.230.70">
    <property type="entry name" value="GHMP Kinase, N-terminal domain"/>
    <property type="match status" value="1"/>
</dbReference>
<dbReference type="HAMAP" id="MF_00564">
    <property type="entry name" value="RNase_PH"/>
    <property type="match status" value="1"/>
</dbReference>
<dbReference type="InterPro" id="IPR001247">
    <property type="entry name" value="ExoRNase_PH_dom1"/>
</dbReference>
<dbReference type="InterPro" id="IPR015847">
    <property type="entry name" value="ExoRNase_PH_dom2"/>
</dbReference>
<dbReference type="InterPro" id="IPR036345">
    <property type="entry name" value="ExoRNase_PH_dom2_sf"/>
</dbReference>
<dbReference type="InterPro" id="IPR027408">
    <property type="entry name" value="PNPase/RNase_PH_dom_sf"/>
</dbReference>
<dbReference type="InterPro" id="IPR020568">
    <property type="entry name" value="Ribosomal_Su5_D2-typ_SF"/>
</dbReference>
<dbReference type="InterPro" id="IPR050080">
    <property type="entry name" value="RNase_PH"/>
</dbReference>
<dbReference type="InterPro" id="IPR002381">
    <property type="entry name" value="RNase_PH_bac-type"/>
</dbReference>
<dbReference type="InterPro" id="IPR018336">
    <property type="entry name" value="RNase_PH_CS"/>
</dbReference>
<dbReference type="NCBIfam" id="TIGR01966">
    <property type="entry name" value="RNasePH"/>
    <property type="match status" value="1"/>
</dbReference>
<dbReference type="PANTHER" id="PTHR11953">
    <property type="entry name" value="EXOSOME COMPLEX COMPONENT"/>
    <property type="match status" value="1"/>
</dbReference>
<dbReference type="PANTHER" id="PTHR11953:SF0">
    <property type="entry name" value="EXOSOME COMPLEX COMPONENT RRP41"/>
    <property type="match status" value="1"/>
</dbReference>
<dbReference type="Pfam" id="PF01138">
    <property type="entry name" value="RNase_PH"/>
    <property type="match status" value="1"/>
</dbReference>
<dbReference type="Pfam" id="PF03725">
    <property type="entry name" value="RNase_PH_C"/>
    <property type="match status" value="1"/>
</dbReference>
<dbReference type="SUPFAM" id="SSF55666">
    <property type="entry name" value="Ribonuclease PH domain 2-like"/>
    <property type="match status" value="1"/>
</dbReference>
<dbReference type="SUPFAM" id="SSF54211">
    <property type="entry name" value="Ribosomal protein S5 domain 2-like"/>
    <property type="match status" value="1"/>
</dbReference>
<dbReference type="PROSITE" id="PS01277">
    <property type="entry name" value="RIBONUCLEASE_PH"/>
    <property type="match status" value="1"/>
</dbReference>
<gene>
    <name evidence="1" type="primary">rph</name>
    <name type="ordered locus">SDY_4074</name>
</gene>
<reference key="1">
    <citation type="journal article" date="2005" name="Nucleic Acids Res.">
        <title>Genome dynamics and diversity of Shigella species, the etiologic agents of bacillary dysentery.</title>
        <authorList>
            <person name="Yang F."/>
            <person name="Yang J."/>
            <person name="Zhang X."/>
            <person name="Chen L."/>
            <person name="Jiang Y."/>
            <person name="Yan Y."/>
            <person name="Tang X."/>
            <person name="Wang J."/>
            <person name="Xiong Z."/>
            <person name="Dong J."/>
            <person name="Xue Y."/>
            <person name="Zhu Y."/>
            <person name="Xu X."/>
            <person name="Sun L."/>
            <person name="Chen S."/>
            <person name="Nie H."/>
            <person name="Peng J."/>
            <person name="Xu J."/>
            <person name="Wang Y."/>
            <person name="Yuan Z."/>
            <person name="Wen Y."/>
            <person name="Yao Z."/>
            <person name="Shen Y."/>
            <person name="Qiang B."/>
            <person name="Hou Y."/>
            <person name="Yu J."/>
            <person name="Jin Q."/>
        </authorList>
    </citation>
    <scope>NUCLEOTIDE SEQUENCE [LARGE SCALE GENOMIC DNA]</scope>
    <source>
        <strain>Sd197</strain>
    </source>
</reference>
<keyword id="KW-0548">Nucleotidyltransferase</keyword>
<keyword id="KW-1185">Reference proteome</keyword>
<keyword id="KW-0694">RNA-binding</keyword>
<keyword id="KW-0698">rRNA processing</keyword>
<keyword id="KW-0808">Transferase</keyword>
<keyword id="KW-0819">tRNA processing</keyword>
<keyword id="KW-0820">tRNA-binding</keyword>